<organism>
    <name type="scientific">Polistes dorsalis</name>
    <name type="common">Paper wasp</name>
    <dbReference type="NCBI Taxonomy" id="34729"/>
    <lineage>
        <taxon>Eukaryota</taxon>
        <taxon>Metazoa</taxon>
        <taxon>Ecdysozoa</taxon>
        <taxon>Arthropoda</taxon>
        <taxon>Hexapoda</taxon>
        <taxon>Insecta</taxon>
        <taxon>Pterygota</taxon>
        <taxon>Neoptera</taxon>
        <taxon>Endopterygota</taxon>
        <taxon>Hymenoptera</taxon>
        <taxon>Apocrita</taxon>
        <taxon>Aculeata</taxon>
        <taxon>Vespoidea</taxon>
        <taxon>Vespidae</taxon>
        <taxon>Polistinae</taxon>
        <taxon>Polistini</taxon>
        <taxon>Polistes</taxon>
    </lineage>
</organism>
<sequence>INWLKLGKKILGAL</sequence>
<keyword id="KW-0027">Amidation</keyword>
<keyword id="KW-0044">Antibiotic</keyword>
<keyword id="KW-0929">Antimicrobial</keyword>
<keyword id="KW-0903">Direct protein sequencing</keyword>
<keyword id="KW-1213">G-protein coupled receptor impairing toxin</keyword>
<keyword id="KW-0467">Mast cell degranulation</keyword>
<keyword id="KW-0472">Membrane</keyword>
<keyword id="KW-0964">Secreted</keyword>
<keyword id="KW-1052">Target cell membrane</keyword>
<keyword id="KW-1053">Target membrane</keyword>
<keyword id="KW-0800">Toxin</keyword>
<accession>P0DRA6</accession>
<comment type="function">
    <text evidence="1 2 3">Antimicrobial peptide. Has activity against both Gram-positive and Gram-negative bacteria (B.subtilis (MIC=15.5 uM), E.coli (MIC=70 uM)). Shows mast cell degranulation activity (EC(50)=15-26 uM). Has moderate hemolytic activity (IC(50)=45 uM) (PubMed:18375018). Its mast cell degranulation activity may be related to the activation of G-protein coupled receptors in mast cells as well as interaction with other proteins located in cell endosomal membranes in the mast cells (By similarity).</text>
</comment>
<comment type="subcellular location">
    <subcellularLocation>
        <location evidence="3">Secreted</location>
    </subcellularLocation>
    <subcellularLocation>
        <location evidence="5">Target cell membrane</location>
    </subcellularLocation>
    <text evidence="6">Assumes an amphipathic alpha-helical conformation in a membrane-like environment.</text>
</comment>
<comment type="tissue specificity">
    <text evidence="6">Expressed by the venom gland.</text>
</comment>
<comment type="miscellaneous">
    <text evidence="3">Most of synthetic analogs show a decreased antimicrobial and hemolytic activity.</text>
</comment>
<comment type="similarity">
    <text evidence="5">Belongs to the MCD family. Mastoparan subfamily.</text>
</comment>
<protein>
    <recommendedName>
        <fullName evidence="4">Mastoparan PDD-B</fullName>
    </recommendedName>
</protein>
<name>MASTB_POLDR</name>
<dbReference type="GO" id="GO:0005576">
    <property type="term" value="C:extracellular region"/>
    <property type="evidence" value="ECO:0007669"/>
    <property type="project" value="UniProtKB-SubCell"/>
</dbReference>
<dbReference type="GO" id="GO:0016020">
    <property type="term" value="C:membrane"/>
    <property type="evidence" value="ECO:0007669"/>
    <property type="project" value="UniProtKB-KW"/>
</dbReference>
<dbReference type="GO" id="GO:0044218">
    <property type="term" value="C:other organism cell membrane"/>
    <property type="evidence" value="ECO:0007669"/>
    <property type="project" value="UniProtKB-KW"/>
</dbReference>
<dbReference type="GO" id="GO:0090729">
    <property type="term" value="F:toxin activity"/>
    <property type="evidence" value="ECO:0007669"/>
    <property type="project" value="UniProtKB-KW"/>
</dbReference>
<dbReference type="GO" id="GO:0042742">
    <property type="term" value="P:defense response to bacterium"/>
    <property type="evidence" value="ECO:0007669"/>
    <property type="project" value="UniProtKB-KW"/>
</dbReference>
<proteinExistence type="evidence at protein level"/>
<feature type="peptide" id="PRO_0000458809" description="Mastoparan PDD-B" evidence="3">
    <location>
        <begin position="1"/>
        <end position="14"/>
    </location>
</feature>
<feature type="modified residue" description="Leucine amide" evidence="3">
    <location>
        <position position="14"/>
    </location>
</feature>
<reference key="1">
    <citation type="journal article" date="2008" name="Peptides">
        <title>New potent antimicrobial peptides from the venom of Polistinae wasps and their analogs.</title>
        <authorList>
            <person name="Cerovsky V."/>
            <person name="Slaninova J."/>
            <person name="Fucik V."/>
            <person name="Hulacova H."/>
            <person name="Borovickova L."/>
            <person name="Jezek R."/>
            <person name="Bednarova L."/>
        </authorList>
    </citation>
    <scope>PROTEIN SEQUENCE</scope>
    <scope>AMIDATION AT LEU-14</scope>
    <scope>SUBCELLULAR LOCATION</scope>
    <scope>SYNTHESIS</scope>
    <scope>FUNCTION</scope>
    <source>
        <tissue>Venom</tissue>
    </source>
</reference>
<evidence type="ECO:0000250" key="1">
    <source>
        <dbReference type="UniProtKB" id="P01514"/>
    </source>
</evidence>
<evidence type="ECO:0000250" key="2">
    <source>
        <dbReference type="UniProtKB" id="P84914"/>
    </source>
</evidence>
<evidence type="ECO:0000269" key="3">
    <source>
    </source>
</evidence>
<evidence type="ECO:0000303" key="4">
    <source>
    </source>
</evidence>
<evidence type="ECO:0000305" key="5"/>
<evidence type="ECO:0000305" key="6">
    <source>
    </source>
</evidence>